<sequence length="197" mass="21961">MAERVATVSRDTHETQIQVHVNLDGQGHFQCETGVAFLDHMLDQVARHGLIDLDIHAKGDLHIDDHHTVEDLGITLGQAVAQAIGDKRGIRRYGHAYVPLDEALSRVVVDFSGRPGLSMDVEFTRASIGRFDTQLFWEFFQGFVNHAQVTLHIDNLKGFNAHHQAETIFKAFGRALRMAVEPDPRMAGRMPSTKGSL</sequence>
<accession>Q1R077</accession>
<organism>
    <name type="scientific">Chromohalobacter salexigens (strain ATCC BAA-138 / DSM 3043 / CIP 106854 / NCIMB 13768 / 1H11)</name>
    <dbReference type="NCBI Taxonomy" id="290398"/>
    <lineage>
        <taxon>Bacteria</taxon>
        <taxon>Pseudomonadati</taxon>
        <taxon>Pseudomonadota</taxon>
        <taxon>Gammaproteobacteria</taxon>
        <taxon>Oceanospirillales</taxon>
        <taxon>Halomonadaceae</taxon>
        <taxon>Chromohalobacter</taxon>
    </lineage>
</organism>
<dbReference type="EC" id="4.2.1.19" evidence="1"/>
<dbReference type="EMBL" id="CP000285">
    <property type="protein sequence ID" value="ABE57881.1"/>
    <property type="molecule type" value="Genomic_DNA"/>
</dbReference>
<dbReference type="RefSeq" id="WP_011505827.1">
    <property type="nucleotide sequence ID" value="NC_007963.1"/>
</dbReference>
<dbReference type="SMR" id="Q1R077"/>
<dbReference type="STRING" id="290398.Csal_0519"/>
<dbReference type="GeneID" id="95333273"/>
<dbReference type="KEGG" id="csa:Csal_0519"/>
<dbReference type="eggNOG" id="COG0131">
    <property type="taxonomic scope" value="Bacteria"/>
</dbReference>
<dbReference type="HOGENOM" id="CLU_044308_3_0_6"/>
<dbReference type="OrthoDB" id="9790411at2"/>
<dbReference type="UniPathway" id="UPA00031">
    <property type="reaction ID" value="UER00011"/>
</dbReference>
<dbReference type="Proteomes" id="UP000000239">
    <property type="component" value="Chromosome"/>
</dbReference>
<dbReference type="GO" id="GO:0005737">
    <property type="term" value="C:cytoplasm"/>
    <property type="evidence" value="ECO:0007669"/>
    <property type="project" value="UniProtKB-SubCell"/>
</dbReference>
<dbReference type="GO" id="GO:0004424">
    <property type="term" value="F:imidazoleglycerol-phosphate dehydratase activity"/>
    <property type="evidence" value="ECO:0007669"/>
    <property type="project" value="UniProtKB-UniRule"/>
</dbReference>
<dbReference type="GO" id="GO:0000105">
    <property type="term" value="P:L-histidine biosynthetic process"/>
    <property type="evidence" value="ECO:0007669"/>
    <property type="project" value="UniProtKB-UniRule"/>
</dbReference>
<dbReference type="CDD" id="cd07914">
    <property type="entry name" value="IGPD"/>
    <property type="match status" value="1"/>
</dbReference>
<dbReference type="FunFam" id="3.30.230.40:FF:000002">
    <property type="entry name" value="Imidazoleglycerol-phosphate dehydratase"/>
    <property type="match status" value="1"/>
</dbReference>
<dbReference type="FunFam" id="3.30.230.40:FF:000003">
    <property type="entry name" value="Imidazoleglycerol-phosphate dehydratase HisB"/>
    <property type="match status" value="1"/>
</dbReference>
<dbReference type="Gene3D" id="3.30.230.40">
    <property type="entry name" value="Imidazole glycerol phosphate dehydratase, domain 1"/>
    <property type="match status" value="2"/>
</dbReference>
<dbReference type="HAMAP" id="MF_00076">
    <property type="entry name" value="HisB"/>
    <property type="match status" value="1"/>
</dbReference>
<dbReference type="InterPro" id="IPR038494">
    <property type="entry name" value="IGPD_sf"/>
</dbReference>
<dbReference type="InterPro" id="IPR000807">
    <property type="entry name" value="ImidazoleglycerolP_deHydtase"/>
</dbReference>
<dbReference type="InterPro" id="IPR020565">
    <property type="entry name" value="ImidazoleglycerP_deHydtase_CS"/>
</dbReference>
<dbReference type="InterPro" id="IPR020568">
    <property type="entry name" value="Ribosomal_Su5_D2-typ_SF"/>
</dbReference>
<dbReference type="NCBIfam" id="NF002106">
    <property type="entry name" value="PRK00951.1-1"/>
    <property type="match status" value="1"/>
</dbReference>
<dbReference type="NCBIfam" id="NF002109">
    <property type="entry name" value="PRK00951.1-5"/>
    <property type="match status" value="1"/>
</dbReference>
<dbReference type="NCBIfam" id="NF002111">
    <property type="entry name" value="PRK00951.2-1"/>
    <property type="match status" value="1"/>
</dbReference>
<dbReference type="NCBIfam" id="NF002114">
    <property type="entry name" value="PRK00951.2-4"/>
    <property type="match status" value="1"/>
</dbReference>
<dbReference type="PANTHER" id="PTHR23133:SF2">
    <property type="entry name" value="IMIDAZOLEGLYCEROL-PHOSPHATE DEHYDRATASE"/>
    <property type="match status" value="1"/>
</dbReference>
<dbReference type="PANTHER" id="PTHR23133">
    <property type="entry name" value="IMIDAZOLEGLYCEROL-PHOSPHATE DEHYDRATASE HIS7"/>
    <property type="match status" value="1"/>
</dbReference>
<dbReference type="Pfam" id="PF00475">
    <property type="entry name" value="IGPD"/>
    <property type="match status" value="1"/>
</dbReference>
<dbReference type="SUPFAM" id="SSF54211">
    <property type="entry name" value="Ribosomal protein S5 domain 2-like"/>
    <property type="match status" value="2"/>
</dbReference>
<dbReference type="PROSITE" id="PS00954">
    <property type="entry name" value="IGP_DEHYDRATASE_1"/>
    <property type="match status" value="1"/>
</dbReference>
<dbReference type="PROSITE" id="PS00955">
    <property type="entry name" value="IGP_DEHYDRATASE_2"/>
    <property type="match status" value="1"/>
</dbReference>
<comment type="catalytic activity">
    <reaction evidence="1">
        <text>D-erythro-1-(imidazol-4-yl)glycerol 3-phosphate = 3-(imidazol-4-yl)-2-oxopropyl phosphate + H2O</text>
        <dbReference type="Rhea" id="RHEA:11040"/>
        <dbReference type="ChEBI" id="CHEBI:15377"/>
        <dbReference type="ChEBI" id="CHEBI:57766"/>
        <dbReference type="ChEBI" id="CHEBI:58278"/>
        <dbReference type="EC" id="4.2.1.19"/>
    </reaction>
</comment>
<comment type="pathway">
    <text evidence="1">Amino-acid biosynthesis; L-histidine biosynthesis; L-histidine from 5-phospho-alpha-D-ribose 1-diphosphate: step 6/9.</text>
</comment>
<comment type="subcellular location">
    <subcellularLocation>
        <location evidence="1">Cytoplasm</location>
    </subcellularLocation>
</comment>
<comment type="similarity">
    <text evidence="1">Belongs to the imidazoleglycerol-phosphate dehydratase family.</text>
</comment>
<gene>
    <name evidence="1" type="primary">hisB</name>
    <name type="ordered locus">Csal_0519</name>
</gene>
<proteinExistence type="inferred from homology"/>
<evidence type="ECO:0000255" key="1">
    <source>
        <dbReference type="HAMAP-Rule" id="MF_00076"/>
    </source>
</evidence>
<name>HIS7_CHRSD</name>
<feature type="chain" id="PRO_1000075242" description="Imidazoleglycerol-phosphate dehydratase">
    <location>
        <begin position="1"/>
        <end position="197"/>
    </location>
</feature>
<keyword id="KW-0028">Amino-acid biosynthesis</keyword>
<keyword id="KW-0963">Cytoplasm</keyword>
<keyword id="KW-0368">Histidine biosynthesis</keyword>
<keyword id="KW-0456">Lyase</keyword>
<keyword id="KW-1185">Reference proteome</keyword>
<protein>
    <recommendedName>
        <fullName evidence="1">Imidazoleglycerol-phosphate dehydratase</fullName>
        <shortName evidence="1">IGPD</shortName>
        <ecNumber evidence="1">4.2.1.19</ecNumber>
    </recommendedName>
</protein>
<reference key="1">
    <citation type="journal article" date="2011" name="Stand. Genomic Sci.">
        <title>Complete genome sequence of the halophilic and highly halotolerant Chromohalobacter salexigens type strain (1H11(T)).</title>
        <authorList>
            <person name="Copeland A."/>
            <person name="O'Connor K."/>
            <person name="Lucas S."/>
            <person name="Lapidus A."/>
            <person name="Berry K.W."/>
            <person name="Detter J.C."/>
            <person name="Del Rio T.G."/>
            <person name="Hammon N."/>
            <person name="Dalin E."/>
            <person name="Tice H."/>
            <person name="Pitluck S."/>
            <person name="Bruce D."/>
            <person name="Goodwin L."/>
            <person name="Han C."/>
            <person name="Tapia R."/>
            <person name="Saunders E."/>
            <person name="Schmutz J."/>
            <person name="Brettin T."/>
            <person name="Larimer F."/>
            <person name="Land M."/>
            <person name="Hauser L."/>
            <person name="Vargas C."/>
            <person name="Nieto J.J."/>
            <person name="Kyrpides N.C."/>
            <person name="Ivanova N."/>
            <person name="Goker M."/>
            <person name="Klenk H.P."/>
            <person name="Csonka L.N."/>
            <person name="Woyke T."/>
        </authorList>
    </citation>
    <scope>NUCLEOTIDE SEQUENCE [LARGE SCALE GENOMIC DNA]</scope>
    <source>
        <strain>ATCC BAA-138 / DSM 3043 / CIP 106854 / NCIMB 13768 / 1H11</strain>
    </source>
</reference>